<organism>
    <name type="scientific">Xenopus laevis</name>
    <name type="common">African clawed frog</name>
    <dbReference type="NCBI Taxonomy" id="8355"/>
    <lineage>
        <taxon>Eukaryota</taxon>
        <taxon>Metazoa</taxon>
        <taxon>Chordata</taxon>
        <taxon>Craniata</taxon>
        <taxon>Vertebrata</taxon>
        <taxon>Euteleostomi</taxon>
        <taxon>Amphibia</taxon>
        <taxon>Batrachia</taxon>
        <taxon>Anura</taxon>
        <taxon>Pipoidea</taxon>
        <taxon>Pipidae</taxon>
        <taxon>Xenopodinae</taxon>
        <taxon>Xenopus</taxon>
        <taxon>Xenopus</taxon>
    </lineage>
</organism>
<name>PDPFA_XENLA</name>
<accession>Q8AVU0</accession>
<protein>
    <recommendedName>
        <fullName>Pancreatic progenitor cell differentiation and proliferation factor A</fullName>
    </recommendedName>
    <alternativeName>
        <fullName>Exocrine differentiation and proliferation factor A</fullName>
    </alternativeName>
</protein>
<feature type="chain" id="PRO_0000359768" description="Pancreatic progenitor cell differentiation and proliferation factor A">
    <location>
        <begin position="1"/>
        <end position="113"/>
    </location>
</feature>
<reference key="1">
    <citation type="submission" date="2005-10" db="EMBL/GenBank/DDBJ databases">
        <authorList>
            <consortium name="NIH - Xenopus Gene Collection (XGC) project"/>
        </authorList>
    </citation>
    <scope>NUCLEOTIDE SEQUENCE [LARGE SCALE MRNA]</scope>
    <source>
        <tissue>Neurula</tissue>
        <tissue>Testis</tissue>
    </source>
</reference>
<gene>
    <name type="primary">ppdpf-a</name>
    <name type="synonym">exdpf-a</name>
</gene>
<sequence>MAAIPSSGSLVATHDYYRRRLGSTSSSSSCGSVDYSGEVIPHHPGLPKADPGHWWASFFFGKSTHPVMTTVSESPENSGSFRITNGLVPCGLTQESVQKQKVSDSKSNSSPSA</sequence>
<comment type="function">
    <text evidence="1">Probable regulator of exocrine pancreas development.</text>
</comment>
<comment type="similarity">
    <text evidence="2">Belongs to the PPDPF family.</text>
</comment>
<proteinExistence type="inferred from homology"/>
<evidence type="ECO:0000250" key="1"/>
<evidence type="ECO:0000305" key="2"/>
<dbReference type="EMBL" id="BC041266">
    <property type="protein sequence ID" value="AAH41266.1"/>
    <property type="molecule type" value="mRNA"/>
</dbReference>
<dbReference type="EMBL" id="BC106322">
    <property type="protein sequence ID" value="AAI06323.1"/>
    <property type="molecule type" value="mRNA"/>
</dbReference>
<dbReference type="RefSeq" id="NP_001079390.1">
    <property type="nucleotide sequence ID" value="NM_001085921.1"/>
</dbReference>
<dbReference type="DNASU" id="379077"/>
<dbReference type="GeneID" id="379077"/>
<dbReference type="KEGG" id="xla:379077"/>
<dbReference type="AGR" id="Xenbase:XB-GENE-959563"/>
<dbReference type="CTD" id="379077"/>
<dbReference type="Xenbase" id="XB-GENE-959563">
    <property type="gene designation" value="ppdpf.S"/>
</dbReference>
<dbReference type="OMA" id="DSDHWWT"/>
<dbReference type="OrthoDB" id="9411431at2759"/>
<dbReference type="Proteomes" id="UP000186698">
    <property type="component" value="Chromosome 9_10S"/>
</dbReference>
<dbReference type="Bgee" id="379077">
    <property type="expression patterns" value="Expressed in egg cell and 19 other cell types or tissues"/>
</dbReference>
<dbReference type="GO" id="GO:0030154">
    <property type="term" value="P:cell differentiation"/>
    <property type="evidence" value="ECO:0007669"/>
    <property type="project" value="UniProtKB-KW"/>
</dbReference>
<dbReference type="InterPro" id="IPR026754">
    <property type="entry name" value="PPDPF"/>
</dbReference>
<dbReference type="PANTHER" id="PTHR14572">
    <property type="entry name" value="PANCREATIC PROGENITOR CELL DIFFERENTIATION AND PROLIFERATION FACTOR"/>
    <property type="match status" value="1"/>
</dbReference>
<dbReference type="Pfam" id="PF15060">
    <property type="entry name" value="PPDFL"/>
    <property type="match status" value="1"/>
</dbReference>
<dbReference type="PRINTS" id="PR02071">
    <property type="entry name" value="PPDPFACTOR"/>
</dbReference>
<keyword id="KW-0217">Developmental protein</keyword>
<keyword id="KW-0221">Differentiation</keyword>
<keyword id="KW-1185">Reference proteome</keyword>